<organism>
    <name type="scientific">Xanthomonas oryzae pv. oryzae (strain MAFF 311018)</name>
    <dbReference type="NCBI Taxonomy" id="342109"/>
    <lineage>
        <taxon>Bacteria</taxon>
        <taxon>Pseudomonadati</taxon>
        <taxon>Pseudomonadota</taxon>
        <taxon>Gammaproteobacteria</taxon>
        <taxon>Lysobacterales</taxon>
        <taxon>Lysobacteraceae</taxon>
        <taxon>Xanthomonas</taxon>
    </lineage>
</organism>
<evidence type="ECO:0000255" key="1">
    <source>
        <dbReference type="HAMAP-Rule" id="MF_00038"/>
    </source>
</evidence>
<reference key="1">
    <citation type="journal article" date="2005" name="Jpn. Agric. Res. Q.">
        <title>Genome sequence of Xanthomonas oryzae pv. oryzae suggests contribution of large numbers of effector genes and insertion sequences to its race diversity.</title>
        <authorList>
            <person name="Ochiai H."/>
            <person name="Inoue Y."/>
            <person name="Takeya M."/>
            <person name="Sasaki A."/>
            <person name="Kaku H."/>
        </authorList>
    </citation>
    <scope>NUCLEOTIDE SEQUENCE [LARGE SCALE GENOMIC DNA]</scope>
    <source>
        <strain>MAFF 311018</strain>
    </source>
</reference>
<dbReference type="EC" id="2.7.8.13" evidence="1"/>
<dbReference type="EMBL" id="AP008229">
    <property type="protein sequence ID" value="BAE70361.1"/>
    <property type="molecule type" value="Genomic_DNA"/>
</dbReference>
<dbReference type="RefSeq" id="WP_011260232.1">
    <property type="nucleotide sequence ID" value="NC_007705.1"/>
</dbReference>
<dbReference type="SMR" id="Q2NZB6"/>
<dbReference type="KEGG" id="xom:XOO3606"/>
<dbReference type="HOGENOM" id="CLU_023982_0_0_6"/>
<dbReference type="UniPathway" id="UPA00219"/>
<dbReference type="GO" id="GO:0005886">
    <property type="term" value="C:plasma membrane"/>
    <property type="evidence" value="ECO:0007669"/>
    <property type="project" value="UniProtKB-SubCell"/>
</dbReference>
<dbReference type="GO" id="GO:0046872">
    <property type="term" value="F:metal ion binding"/>
    <property type="evidence" value="ECO:0007669"/>
    <property type="project" value="UniProtKB-KW"/>
</dbReference>
<dbReference type="GO" id="GO:0008963">
    <property type="term" value="F:phospho-N-acetylmuramoyl-pentapeptide-transferase activity"/>
    <property type="evidence" value="ECO:0007669"/>
    <property type="project" value="UniProtKB-UniRule"/>
</dbReference>
<dbReference type="GO" id="GO:0051992">
    <property type="term" value="F:UDP-N-acetylmuramoyl-L-alanyl-D-glutamyl-meso-2,6-diaminopimelyl-D-alanyl-D-alanine:undecaprenyl-phosphate transferase activity"/>
    <property type="evidence" value="ECO:0007669"/>
    <property type="project" value="RHEA"/>
</dbReference>
<dbReference type="GO" id="GO:0051301">
    <property type="term" value="P:cell division"/>
    <property type="evidence" value="ECO:0007669"/>
    <property type="project" value="UniProtKB-KW"/>
</dbReference>
<dbReference type="GO" id="GO:0071555">
    <property type="term" value="P:cell wall organization"/>
    <property type="evidence" value="ECO:0007669"/>
    <property type="project" value="UniProtKB-KW"/>
</dbReference>
<dbReference type="GO" id="GO:0009252">
    <property type="term" value="P:peptidoglycan biosynthetic process"/>
    <property type="evidence" value="ECO:0007669"/>
    <property type="project" value="UniProtKB-UniRule"/>
</dbReference>
<dbReference type="GO" id="GO:0008360">
    <property type="term" value="P:regulation of cell shape"/>
    <property type="evidence" value="ECO:0007669"/>
    <property type="project" value="UniProtKB-KW"/>
</dbReference>
<dbReference type="CDD" id="cd06852">
    <property type="entry name" value="GT_MraY"/>
    <property type="match status" value="1"/>
</dbReference>
<dbReference type="HAMAP" id="MF_00038">
    <property type="entry name" value="MraY"/>
    <property type="match status" value="1"/>
</dbReference>
<dbReference type="InterPro" id="IPR000715">
    <property type="entry name" value="Glycosyl_transferase_4"/>
</dbReference>
<dbReference type="InterPro" id="IPR003524">
    <property type="entry name" value="PNAcMuramoyl-5peptid_Trfase"/>
</dbReference>
<dbReference type="InterPro" id="IPR018480">
    <property type="entry name" value="PNAcMuramoyl-5peptid_Trfase_CS"/>
</dbReference>
<dbReference type="NCBIfam" id="TIGR00445">
    <property type="entry name" value="mraY"/>
    <property type="match status" value="1"/>
</dbReference>
<dbReference type="PANTHER" id="PTHR22926">
    <property type="entry name" value="PHOSPHO-N-ACETYLMURAMOYL-PENTAPEPTIDE-TRANSFERASE"/>
    <property type="match status" value="1"/>
</dbReference>
<dbReference type="PANTHER" id="PTHR22926:SF5">
    <property type="entry name" value="PHOSPHO-N-ACETYLMURAMOYL-PENTAPEPTIDE-TRANSFERASE HOMOLOG"/>
    <property type="match status" value="1"/>
</dbReference>
<dbReference type="Pfam" id="PF00953">
    <property type="entry name" value="Glycos_transf_4"/>
    <property type="match status" value="1"/>
</dbReference>
<dbReference type="PROSITE" id="PS01347">
    <property type="entry name" value="MRAY_1"/>
    <property type="match status" value="1"/>
</dbReference>
<dbReference type="PROSITE" id="PS01348">
    <property type="entry name" value="MRAY_2"/>
    <property type="match status" value="1"/>
</dbReference>
<feature type="chain" id="PRO_0000235504" description="Phospho-N-acetylmuramoyl-pentapeptide-transferase">
    <location>
        <begin position="1"/>
        <end position="361"/>
    </location>
</feature>
<feature type="transmembrane region" description="Helical" evidence="1">
    <location>
        <begin position="25"/>
        <end position="45"/>
    </location>
</feature>
<feature type="transmembrane region" description="Helical" evidence="1">
    <location>
        <begin position="73"/>
        <end position="93"/>
    </location>
</feature>
<feature type="transmembrane region" description="Helical" evidence="1">
    <location>
        <begin position="98"/>
        <end position="118"/>
    </location>
</feature>
<feature type="transmembrane region" description="Helical" evidence="1">
    <location>
        <begin position="139"/>
        <end position="159"/>
    </location>
</feature>
<feature type="transmembrane region" description="Helical" evidence="1">
    <location>
        <begin position="168"/>
        <end position="188"/>
    </location>
</feature>
<feature type="transmembrane region" description="Helical" evidence="1">
    <location>
        <begin position="200"/>
        <end position="220"/>
    </location>
</feature>
<feature type="transmembrane region" description="Helical" evidence="1">
    <location>
        <begin position="237"/>
        <end position="257"/>
    </location>
</feature>
<feature type="transmembrane region" description="Helical" evidence="1">
    <location>
        <begin position="264"/>
        <end position="284"/>
    </location>
</feature>
<feature type="transmembrane region" description="Helical" evidence="1">
    <location>
        <begin position="289"/>
        <end position="309"/>
    </location>
</feature>
<feature type="transmembrane region" description="Helical" evidence="1">
    <location>
        <begin position="339"/>
        <end position="359"/>
    </location>
</feature>
<gene>
    <name evidence="1" type="primary">mraY</name>
    <name type="ordered locus">XOO3606</name>
</gene>
<protein>
    <recommendedName>
        <fullName evidence="1">Phospho-N-acetylmuramoyl-pentapeptide-transferase</fullName>
        <ecNumber evidence="1">2.7.8.13</ecNumber>
    </recommendedName>
    <alternativeName>
        <fullName evidence="1">UDP-MurNAc-pentapeptide phosphotransferase</fullName>
    </alternativeName>
</protein>
<proteinExistence type="inferred from homology"/>
<accession>Q2NZB6</accession>
<name>MRAY_XANOM</name>
<sequence length="361" mass="39665">MLLELARWLQQLESLFGLFNYLTFRGILAALTALFLSLWMGPAVIRKLAQFKGGQPIRQDGPQTHFSKAGTPTMGGSLILLTVTLSVLLWGDLRNRYVWLVLAVMICFGAIGWYDDWIKIVRRDPNGLKSRWKYLLQSIFGLAAGLFLYYTADVPAAITFYIPMFKSIALPLVGVSFVVIAYFWIVGFSNAVNLTDGLDGLAIMPTVLVACALGVFAYASGNVVFAEYLKIPLIPGAGELIIICSAIAGAGLGFLWFNTYPAMVFMGDIGALSLGAVLGTIAVIVRQEMVLVIMGGVFVIETLSVIIQVASFKLTGKRVFRMAPIHHHFELKGWPEPRVIVRFWIISVVLVLIGLATLKVR</sequence>
<keyword id="KW-0131">Cell cycle</keyword>
<keyword id="KW-0132">Cell division</keyword>
<keyword id="KW-0997">Cell inner membrane</keyword>
<keyword id="KW-1003">Cell membrane</keyword>
<keyword id="KW-0133">Cell shape</keyword>
<keyword id="KW-0961">Cell wall biogenesis/degradation</keyword>
<keyword id="KW-0460">Magnesium</keyword>
<keyword id="KW-0472">Membrane</keyword>
<keyword id="KW-0479">Metal-binding</keyword>
<keyword id="KW-0573">Peptidoglycan synthesis</keyword>
<keyword id="KW-0808">Transferase</keyword>
<keyword id="KW-0812">Transmembrane</keyword>
<keyword id="KW-1133">Transmembrane helix</keyword>
<comment type="function">
    <text evidence="1">Catalyzes the initial step of the lipid cycle reactions in the biosynthesis of the cell wall peptidoglycan: transfers peptidoglycan precursor phospho-MurNAc-pentapeptide from UDP-MurNAc-pentapeptide onto the lipid carrier undecaprenyl phosphate, yielding undecaprenyl-pyrophosphoryl-MurNAc-pentapeptide, known as lipid I.</text>
</comment>
<comment type="catalytic activity">
    <reaction evidence="1">
        <text>UDP-N-acetyl-alpha-D-muramoyl-L-alanyl-gamma-D-glutamyl-meso-2,6-diaminopimeloyl-D-alanyl-D-alanine + di-trans,octa-cis-undecaprenyl phosphate = di-trans,octa-cis-undecaprenyl diphospho-N-acetyl-alpha-D-muramoyl-L-alanyl-D-glutamyl-meso-2,6-diaminopimeloyl-D-alanyl-D-alanine + UMP</text>
        <dbReference type="Rhea" id="RHEA:28386"/>
        <dbReference type="ChEBI" id="CHEBI:57865"/>
        <dbReference type="ChEBI" id="CHEBI:60392"/>
        <dbReference type="ChEBI" id="CHEBI:61386"/>
        <dbReference type="ChEBI" id="CHEBI:61387"/>
        <dbReference type="EC" id="2.7.8.13"/>
    </reaction>
</comment>
<comment type="cofactor">
    <cofactor evidence="1">
        <name>Mg(2+)</name>
        <dbReference type="ChEBI" id="CHEBI:18420"/>
    </cofactor>
</comment>
<comment type="pathway">
    <text evidence="1">Cell wall biogenesis; peptidoglycan biosynthesis.</text>
</comment>
<comment type="subcellular location">
    <subcellularLocation>
        <location evidence="1">Cell inner membrane</location>
        <topology evidence="1">Multi-pass membrane protein</topology>
    </subcellularLocation>
</comment>
<comment type="similarity">
    <text evidence="1">Belongs to the glycosyltransferase 4 family. MraY subfamily.</text>
</comment>